<evidence type="ECO:0000250" key="1">
    <source>
        <dbReference type="UniProtKB" id="Q17R31"/>
    </source>
</evidence>
<evidence type="ECO:0000250" key="2">
    <source>
        <dbReference type="UniProtKB" id="Q6GML7"/>
    </source>
</evidence>
<evidence type="ECO:0000303" key="3">
    <source>
    </source>
</evidence>
<evidence type="ECO:0000305" key="4"/>
<evidence type="ECO:0007744" key="5">
    <source>
    </source>
</evidence>
<name>TATD1_MOUSE</name>
<accession>Q6P8M1</accession>
<accession>Q8BY37</accession>
<organism>
    <name type="scientific">Mus musculus</name>
    <name type="common">Mouse</name>
    <dbReference type="NCBI Taxonomy" id="10090"/>
    <lineage>
        <taxon>Eukaryota</taxon>
        <taxon>Metazoa</taxon>
        <taxon>Chordata</taxon>
        <taxon>Craniata</taxon>
        <taxon>Vertebrata</taxon>
        <taxon>Euteleostomi</taxon>
        <taxon>Mammalia</taxon>
        <taxon>Eutheria</taxon>
        <taxon>Euarchontoglires</taxon>
        <taxon>Glires</taxon>
        <taxon>Rodentia</taxon>
        <taxon>Myomorpha</taxon>
        <taxon>Muroidea</taxon>
        <taxon>Muridae</taxon>
        <taxon>Murinae</taxon>
        <taxon>Mus</taxon>
        <taxon>Mus</taxon>
    </lineage>
</organism>
<proteinExistence type="evidence at protein level"/>
<dbReference type="EC" id="3.1.21.-"/>
<dbReference type="EMBL" id="AK042248">
    <property type="protein sequence ID" value="BAC31203.1"/>
    <property type="molecule type" value="mRNA"/>
</dbReference>
<dbReference type="EMBL" id="BC061187">
    <property type="protein sequence ID" value="AAH61187.1"/>
    <property type="molecule type" value="mRNA"/>
</dbReference>
<dbReference type="CCDS" id="CCDS88768.1">
    <molecule id="Q6P8M1-1"/>
</dbReference>
<dbReference type="RefSeq" id="NP_001355357.1">
    <molecule id="Q6P8M1-1"/>
    <property type="nucleotide sequence ID" value="NM_001368428.1"/>
</dbReference>
<dbReference type="RefSeq" id="NP_780360.1">
    <property type="nucleotide sequence ID" value="NM_175151.4"/>
</dbReference>
<dbReference type="RefSeq" id="XP_006521428.1">
    <property type="nucleotide sequence ID" value="XM_006521365.3"/>
</dbReference>
<dbReference type="SMR" id="Q6P8M1"/>
<dbReference type="BioGRID" id="213619">
    <property type="interactions" value="9"/>
</dbReference>
<dbReference type="FunCoup" id="Q6P8M1">
    <property type="interactions" value="2004"/>
</dbReference>
<dbReference type="STRING" id="10090.ENSMUSP00000105783"/>
<dbReference type="iPTMnet" id="Q6P8M1"/>
<dbReference type="PhosphoSitePlus" id="Q6P8M1"/>
<dbReference type="SwissPalm" id="Q6P8M1"/>
<dbReference type="PaxDb" id="10090-ENSMUSP00000105783"/>
<dbReference type="PeptideAtlas" id="Q6P8M1"/>
<dbReference type="ProteomicsDB" id="254817">
    <molecule id="Q6P8M1-1"/>
</dbReference>
<dbReference type="ProteomicsDB" id="254818">
    <molecule id="Q6P8M1-2"/>
</dbReference>
<dbReference type="Pumba" id="Q6P8M1"/>
<dbReference type="Antibodypedia" id="13907">
    <property type="antibodies" value="94 antibodies from 19 providers"/>
</dbReference>
<dbReference type="DNASU" id="69694"/>
<dbReference type="Ensembl" id="ENSMUST00000228538.3">
    <molecule id="Q6P8M1-1"/>
    <property type="protein sequence ID" value="ENSMUSP00000154677.2"/>
    <property type="gene ID" value="ENSMUSG00000050891.11"/>
</dbReference>
<dbReference type="GeneID" id="69694"/>
<dbReference type="KEGG" id="mmu:69694"/>
<dbReference type="UCSC" id="uc007vtr.1">
    <molecule id="Q6P8M1-2"/>
    <property type="organism name" value="mouse"/>
</dbReference>
<dbReference type="UCSC" id="uc007vtt.1">
    <molecule id="Q6P8M1-1"/>
    <property type="organism name" value="mouse"/>
</dbReference>
<dbReference type="AGR" id="MGI:1916944"/>
<dbReference type="CTD" id="83940"/>
<dbReference type="MGI" id="MGI:1916944">
    <property type="gene designation" value="Tatdn1"/>
</dbReference>
<dbReference type="VEuPathDB" id="HostDB:ENSMUSG00000050891"/>
<dbReference type="eggNOG" id="KOG3020">
    <property type="taxonomic scope" value="Eukaryota"/>
</dbReference>
<dbReference type="GeneTree" id="ENSGT00940000156272"/>
<dbReference type="InParanoid" id="Q6P8M1"/>
<dbReference type="OMA" id="YGGSQKH"/>
<dbReference type="OrthoDB" id="6079689at2759"/>
<dbReference type="PhylomeDB" id="Q6P8M1"/>
<dbReference type="TreeFam" id="TF324192"/>
<dbReference type="BioGRID-ORCS" id="69694">
    <property type="hits" value="2 hits in 76 CRISPR screens"/>
</dbReference>
<dbReference type="ChiTaRS" id="Tatdn1">
    <property type="organism name" value="mouse"/>
</dbReference>
<dbReference type="PRO" id="PR:Q6P8M1"/>
<dbReference type="Proteomes" id="UP000000589">
    <property type="component" value="Chromosome 15"/>
</dbReference>
<dbReference type="RNAct" id="Q6P8M1">
    <property type="molecule type" value="protein"/>
</dbReference>
<dbReference type="Bgee" id="ENSMUSG00000050891">
    <property type="expression patterns" value="Expressed in knee joint and 229 other cell types or tissues"/>
</dbReference>
<dbReference type="ExpressionAtlas" id="Q6P8M1">
    <property type="expression patterns" value="baseline and differential"/>
</dbReference>
<dbReference type="GO" id="GO:0005654">
    <property type="term" value="C:nucleoplasm"/>
    <property type="evidence" value="ECO:0007669"/>
    <property type="project" value="Ensembl"/>
</dbReference>
<dbReference type="GO" id="GO:0046872">
    <property type="term" value="F:metal ion binding"/>
    <property type="evidence" value="ECO:0007669"/>
    <property type="project" value="UniProtKB-KW"/>
</dbReference>
<dbReference type="GO" id="GO:0004518">
    <property type="term" value="F:nuclease activity"/>
    <property type="evidence" value="ECO:0007669"/>
    <property type="project" value="UniProtKB-KW"/>
</dbReference>
<dbReference type="CDD" id="cd01310">
    <property type="entry name" value="TatD_DNAse"/>
    <property type="match status" value="1"/>
</dbReference>
<dbReference type="FunFam" id="3.20.20.140:FF:000034">
    <property type="entry name" value="putative deoxyribonuclease TATDN1 isoform X1"/>
    <property type="match status" value="1"/>
</dbReference>
<dbReference type="Gene3D" id="3.20.20.140">
    <property type="entry name" value="Metal-dependent hydrolases"/>
    <property type="match status" value="1"/>
</dbReference>
<dbReference type="InterPro" id="IPR018228">
    <property type="entry name" value="DNase_TatD-rel_CS"/>
</dbReference>
<dbReference type="InterPro" id="IPR032466">
    <property type="entry name" value="Metal_Hydrolase"/>
</dbReference>
<dbReference type="InterPro" id="IPR001130">
    <property type="entry name" value="TatD-like"/>
</dbReference>
<dbReference type="InterPro" id="IPR050891">
    <property type="entry name" value="TatD-type_Hydrolase"/>
</dbReference>
<dbReference type="PANTHER" id="PTHR10060:SF15">
    <property type="entry name" value="DEOXYRIBONUCLEASE TATDN1"/>
    <property type="match status" value="1"/>
</dbReference>
<dbReference type="PANTHER" id="PTHR10060">
    <property type="entry name" value="TATD FAMILY DEOXYRIBONUCLEASE"/>
    <property type="match status" value="1"/>
</dbReference>
<dbReference type="Pfam" id="PF01026">
    <property type="entry name" value="TatD_DNase"/>
    <property type="match status" value="1"/>
</dbReference>
<dbReference type="PIRSF" id="PIRSF005902">
    <property type="entry name" value="DNase_TatD"/>
    <property type="match status" value="1"/>
</dbReference>
<dbReference type="SUPFAM" id="SSF51556">
    <property type="entry name" value="Metallo-dependent hydrolases"/>
    <property type="match status" value="1"/>
</dbReference>
<dbReference type="PROSITE" id="PS01091">
    <property type="entry name" value="TATD_3"/>
    <property type="match status" value="1"/>
</dbReference>
<protein>
    <recommendedName>
        <fullName>Deoxyribonuclease TATDN1</fullName>
        <ecNumber>3.1.21.-</ecNumber>
    </recommendedName>
</protein>
<keyword id="KW-0025">Alternative splicing</keyword>
<keyword id="KW-0378">Hydrolase</keyword>
<keyword id="KW-0479">Metal-binding</keyword>
<keyword id="KW-0540">Nuclease</keyword>
<keyword id="KW-0539">Nucleus</keyword>
<keyword id="KW-1185">Reference proteome</keyword>
<feature type="chain" id="PRO_0000313591" description="Deoxyribonuclease TATDN1">
    <location>
        <begin position="1"/>
        <end position="295"/>
    </location>
</feature>
<feature type="binding site" evidence="1">
    <location>
        <position position="112"/>
    </location>
    <ligand>
        <name>a divalent metal cation</name>
        <dbReference type="ChEBI" id="CHEBI:60240"/>
        <label>1</label>
    </ligand>
</feature>
<feature type="binding site" evidence="1">
    <location>
        <position position="112"/>
    </location>
    <ligand>
        <name>a divalent metal cation</name>
        <dbReference type="ChEBI" id="CHEBI:60240"/>
        <label>2</label>
    </ligand>
</feature>
<feature type="binding site" evidence="1">
    <location>
        <position position="149"/>
    </location>
    <ligand>
        <name>a divalent metal cation</name>
        <dbReference type="ChEBI" id="CHEBI:60240"/>
        <label>2</label>
    </ligand>
</feature>
<feature type="binding site" evidence="1">
    <location>
        <position position="174"/>
    </location>
    <ligand>
        <name>a divalent metal cation</name>
        <dbReference type="ChEBI" id="CHEBI:60240"/>
        <label>2</label>
    </ligand>
</feature>
<feature type="binding site" evidence="1">
    <location>
        <position position="222"/>
    </location>
    <ligand>
        <name>a divalent metal cation</name>
        <dbReference type="ChEBI" id="CHEBI:60240"/>
        <label>1</label>
    </ligand>
</feature>
<feature type="modified residue" description="N6-succinyllysine" evidence="5">
    <location>
        <position position="27"/>
    </location>
</feature>
<feature type="modified residue" description="N6-succinyllysine" evidence="5">
    <location>
        <position position="46"/>
    </location>
</feature>
<feature type="splice variant" id="VSP_030046" description="In isoform 2." evidence="3">
    <original>I</original>
    <variation>M</variation>
    <location>
        <position position="264"/>
    </location>
</feature>
<feature type="splice variant" id="VSP_030047" description="In isoform 2." evidence="3">
    <location>
        <position position="265"/>
    </location>
</feature>
<comment type="function">
    <text evidence="2">Deoxyribonuclease which catalyzes (in vitro) the decatenation of kinetoplast DNA, which are circular DNA catenated to each other, producing linear DNA molecules (By similarity). Plays an important role in chromosomal segregation and cell cycle progression during eye development probably via its DNA decatenation activity (By similarity).</text>
</comment>
<comment type="cofactor">
    <cofactor evidence="1">
        <name>a divalent metal cation</name>
        <dbReference type="ChEBI" id="CHEBI:60240"/>
    </cofactor>
    <text evidence="1">Binds 2 divalent metal cations per subunit.</text>
</comment>
<comment type="subcellular location">
    <subcellularLocation>
        <location evidence="4">Nucleus</location>
    </subcellularLocation>
</comment>
<comment type="alternative products">
    <event type="alternative splicing"/>
    <isoform>
        <id>Q6P8M1-1</id>
        <name>1</name>
        <sequence type="displayed"/>
    </isoform>
    <isoform>
        <id>Q6P8M1-2</id>
        <name>2</name>
        <sequence type="described" ref="VSP_030046 VSP_030047"/>
    </isoform>
</comment>
<comment type="similarity">
    <text evidence="4">Belongs to the metallo-dependent hydrolases superfamily. TatD-type hydrolase family.</text>
</comment>
<sequence length="295" mass="33365">MSLFKFVDIGINLTDPMFRGIYRGVQKHQDDLQDVIERAIQIGVKKFMITGGSLQDSKDALQLAQTNDMFFSTVGCHPTRCDEFEKGSPDQYLAGLLSLAENNKGKVVAIGECGLDFDRLQFCPKDTQLKYFEKQFELSEQTQLPMFLHCRNSHTEFLDIMRRNRDRYVGGVVHSFDGTKEAAAALVDLGLYIGFNGCSLKTEANLEVLKSIPSEKLMIETDAPWCGVKSTHAGSKYINTSFPTKKKWENGHCLKDRNEPCHIIQILEIMSAVREEDPLELANTLYNNTIKVFFS</sequence>
<gene>
    <name type="primary">Tatdn1</name>
</gene>
<reference key="1">
    <citation type="journal article" date="2005" name="Science">
        <title>The transcriptional landscape of the mammalian genome.</title>
        <authorList>
            <person name="Carninci P."/>
            <person name="Kasukawa T."/>
            <person name="Katayama S."/>
            <person name="Gough J."/>
            <person name="Frith M.C."/>
            <person name="Maeda N."/>
            <person name="Oyama R."/>
            <person name="Ravasi T."/>
            <person name="Lenhard B."/>
            <person name="Wells C."/>
            <person name="Kodzius R."/>
            <person name="Shimokawa K."/>
            <person name="Bajic V.B."/>
            <person name="Brenner S.E."/>
            <person name="Batalov S."/>
            <person name="Forrest A.R."/>
            <person name="Zavolan M."/>
            <person name="Davis M.J."/>
            <person name="Wilming L.G."/>
            <person name="Aidinis V."/>
            <person name="Allen J.E."/>
            <person name="Ambesi-Impiombato A."/>
            <person name="Apweiler R."/>
            <person name="Aturaliya R.N."/>
            <person name="Bailey T.L."/>
            <person name="Bansal M."/>
            <person name="Baxter L."/>
            <person name="Beisel K.W."/>
            <person name="Bersano T."/>
            <person name="Bono H."/>
            <person name="Chalk A.M."/>
            <person name="Chiu K.P."/>
            <person name="Choudhary V."/>
            <person name="Christoffels A."/>
            <person name="Clutterbuck D.R."/>
            <person name="Crowe M.L."/>
            <person name="Dalla E."/>
            <person name="Dalrymple B.P."/>
            <person name="de Bono B."/>
            <person name="Della Gatta G."/>
            <person name="di Bernardo D."/>
            <person name="Down T."/>
            <person name="Engstrom P."/>
            <person name="Fagiolini M."/>
            <person name="Faulkner G."/>
            <person name="Fletcher C.F."/>
            <person name="Fukushima T."/>
            <person name="Furuno M."/>
            <person name="Futaki S."/>
            <person name="Gariboldi M."/>
            <person name="Georgii-Hemming P."/>
            <person name="Gingeras T.R."/>
            <person name="Gojobori T."/>
            <person name="Green R.E."/>
            <person name="Gustincich S."/>
            <person name="Harbers M."/>
            <person name="Hayashi Y."/>
            <person name="Hensch T.K."/>
            <person name="Hirokawa N."/>
            <person name="Hill D."/>
            <person name="Huminiecki L."/>
            <person name="Iacono M."/>
            <person name="Ikeo K."/>
            <person name="Iwama A."/>
            <person name="Ishikawa T."/>
            <person name="Jakt M."/>
            <person name="Kanapin A."/>
            <person name="Katoh M."/>
            <person name="Kawasawa Y."/>
            <person name="Kelso J."/>
            <person name="Kitamura H."/>
            <person name="Kitano H."/>
            <person name="Kollias G."/>
            <person name="Krishnan S.P."/>
            <person name="Kruger A."/>
            <person name="Kummerfeld S.K."/>
            <person name="Kurochkin I.V."/>
            <person name="Lareau L.F."/>
            <person name="Lazarevic D."/>
            <person name="Lipovich L."/>
            <person name="Liu J."/>
            <person name="Liuni S."/>
            <person name="McWilliam S."/>
            <person name="Madan Babu M."/>
            <person name="Madera M."/>
            <person name="Marchionni L."/>
            <person name="Matsuda H."/>
            <person name="Matsuzawa S."/>
            <person name="Miki H."/>
            <person name="Mignone F."/>
            <person name="Miyake S."/>
            <person name="Morris K."/>
            <person name="Mottagui-Tabar S."/>
            <person name="Mulder N."/>
            <person name="Nakano N."/>
            <person name="Nakauchi H."/>
            <person name="Ng P."/>
            <person name="Nilsson R."/>
            <person name="Nishiguchi S."/>
            <person name="Nishikawa S."/>
            <person name="Nori F."/>
            <person name="Ohara O."/>
            <person name="Okazaki Y."/>
            <person name="Orlando V."/>
            <person name="Pang K.C."/>
            <person name="Pavan W.J."/>
            <person name="Pavesi G."/>
            <person name="Pesole G."/>
            <person name="Petrovsky N."/>
            <person name="Piazza S."/>
            <person name="Reed J."/>
            <person name="Reid J.F."/>
            <person name="Ring B.Z."/>
            <person name="Ringwald M."/>
            <person name="Rost B."/>
            <person name="Ruan Y."/>
            <person name="Salzberg S.L."/>
            <person name="Sandelin A."/>
            <person name="Schneider C."/>
            <person name="Schoenbach C."/>
            <person name="Sekiguchi K."/>
            <person name="Semple C.A."/>
            <person name="Seno S."/>
            <person name="Sessa L."/>
            <person name="Sheng Y."/>
            <person name="Shibata Y."/>
            <person name="Shimada H."/>
            <person name="Shimada K."/>
            <person name="Silva D."/>
            <person name="Sinclair B."/>
            <person name="Sperling S."/>
            <person name="Stupka E."/>
            <person name="Sugiura K."/>
            <person name="Sultana R."/>
            <person name="Takenaka Y."/>
            <person name="Taki K."/>
            <person name="Tammoja K."/>
            <person name="Tan S.L."/>
            <person name="Tang S."/>
            <person name="Taylor M.S."/>
            <person name="Tegner J."/>
            <person name="Teichmann S.A."/>
            <person name="Ueda H.R."/>
            <person name="van Nimwegen E."/>
            <person name="Verardo R."/>
            <person name="Wei C.L."/>
            <person name="Yagi K."/>
            <person name="Yamanishi H."/>
            <person name="Zabarovsky E."/>
            <person name="Zhu S."/>
            <person name="Zimmer A."/>
            <person name="Hide W."/>
            <person name="Bult C."/>
            <person name="Grimmond S.M."/>
            <person name="Teasdale R.D."/>
            <person name="Liu E.T."/>
            <person name="Brusic V."/>
            <person name="Quackenbush J."/>
            <person name="Wahlestedt C."/>
            <person name="Mattick J.S."/>
            <person name="Hume D.A."/>
            <person name="Kai C."/>
            <person name="Sasaki D."/>
            <person name="Tomaru Y."/>
            <person name="Fukuda S."/>
            <person name="Kanamori-Katayama M."/>
            <person name="Suzuki M."/>
            <person name="Aoki J."/>
            <person name="Arakawa T."/>
            <person name="Iida J."/>
            <person name="Imamura K."/>
            <person name="Itoh M."/>
            <person name="Kato T."/>
            <person name="Kawaji H."/>
            <person name="Kawagashira N."/>
            <person name="Kawashima T."/>
            <person name="Kojima M."/>
            <person name="Kondo S."/>
            <person name="Konno H."/>
            <person name="Nakano K."/>
            <person name="Ninomiya N."/>
            <person name="Nishio T."/>
            <person name="Okada M."/>
            <person name="Plessy C."/>
            <person name="Shibata K."/>
            <person name="Shiraki T."/>
            <person name="Suzuki S."/>
            <person name="Tagami M."/>
            <person name="Waki K."/>
            <person name="Watahiki A."/>
            <person name="Okamura-Oho Y."/>
            <person name="Suzuki H."/>
            <person name="Kawai J."/>
            <person name="Hayashizaki Y."/>
        </authorList>
    </citation>
    <scope>NUCLEOTIDE SEQUENCE [LARGE SCALE MRNA] (ISOFORM 2)</scope>
    <source>
        <strain>C57BL/6J</strain>
        <tissue>Thymus</tissue>
    </source>
</reference>
<reference key="2">
    <citation type="journal article" date="2004" name="Genome Res.">
        <title>The status, quality, and expansion of the NIH full-length cDNA project: the Mammalian Gene Collection (MGC).</title>
        <authorList>
            <consortium name="The MGC Project Team"/>
        </authorList>
    </citation>
    <scope>NUCLEOTIDE SEQUENCE [LARGE SCALE MRNA] (ISOFORM 1)</scope>
    <source>
        <tissue>Testis</tissue>
    </source>
</reference>
<reference key="3">
    <citation type="journal article" date="2010" name="Cell">
        <title>A tissue-specific atlas of mouse protein phosphorylation and expression.</title>
        <authorList>
            <person name="Huttlin E.L."/>
            <person name="Jedrychowski M.P."/>
            <person name="Elias J.E."/>
            <person name="Goswami T."/>
            <person name="Rad R."/>
            <person name="Beausoleil S.A."/>
            <person name="Villen J."/>
            <person name="Haas W."/>
            <person name="Sowa M.E."/>
            <person name="Gygi S.P."/>
        </authorList>
    </citation>
    <scope>IDENTIFICATION BY MASS SPECTROMETRY [LARGE SCALE ANALYSIS]</scope>
    <source>
        <tissue>Brain</tissue>
        <tissue>Brown adipose tissue</tissue>
        <tissue>Heart</tissue>
        <tissue>Kidney</tissue>
        <tissue>Liver</tissue>
        <tissue>Lung</tissue>
        <tissue>Pancreas</tissue>
        <tissue>Spleen</tissue>
        <tissue>Testis</tissue>
    </source>
</reference>
<reference key="4">
    <citation type="journal article" date="2013" name="Mol. Cell">
        <title>SIRT5-mediated lysine desuccinylation impacts diverse metabolic pathways.</title>
        <authorList>
            <person name="Park J."/>
            <person name="Chen Y."/>
            <person name="Tishkoff D.X."/>
            <person name="Peng C."/>
            <person name="Tan M."/>
            <person name="Dai L."/>
            <person name="Xie Z."/>
            <person name="Zhang Y."/>
            <person name="Zwaans B.M."/>
            <person name="Skinner M.E."/>
            <person name="Lombard D.B."/>
            <person name="Zhao Y."/>
        </authorList>
    </citation>
    <scope>SUCCINYLATION [LARGE SCALE ANALYSIS] AT LYS-27 AND LYS-46</scope>
    <scope>IDENTIFICATION BY MASS SPECTROMETRY [LARGE SCALE ANALYSIS]</scope>
    <source>
        <tissue>Liver</tissue>
    </source>
</reference>